<organism>
    <name type="scientific">Methanosarcina mazei (strain ATCC BAA-159 / DSM 3647 / Goe1 / Go1 / JCM 11833 / OCM 88)</name>
    <name type="common">Methanosarcina frisia</name>
    <dbReference type="NCBI Taxonomy" id="192952"/>
    <lineage>
        <taxon>Archaea</taxon>
        <taxon>Methanobacteriati</taxon>
        <taxon>Methanobacteriota</taxon>
        <taxon>Stenosarchaea group</taxon>
        <taxon>Methanomicrobia</taxon>
        <taxon>Methanosarcinales</taxon>
        <taxon>Methanosarcinaceae</taxon>
        <taxon>Methanosarcina</taxon>
    </lineage>
</organism>
<accession>Q8PYZ1</accession>
<proteinExistence type="inferred from homology"/>
<protein>
    <recommendedName>
        <fullName evidence="1">Proline--tRNA ligase</fullName>
        <ecNumber evidence="1">6.1.1.15</ecNumber>
    </recommendedName>
    <alternativeName>
        <fullName evidence="1">Prolyl-tRNA synthetase</fullName>
        <shortName evidence="1">ProRS</shortName>
    </alternativeName>
</protein>
<keyword id="KW-0030">Aminoacyl-tRNA synthetase</keyword>
<keyword id="KW-0067">ATP-binding</keyword>
<keyword id="KW-0963">Cytoplasm</keyword>
<keyword id="KW-0436">Ligase</keyword>
<keyword id="KW-0547">Nucleotide-binding</keyword>
<keyword id="KW-0648">Protein biosynthesis</keyword>
<sequence>MAESEKEAALPPKEAFSDWYNELLWMAEIMDVRYPVKGLYVWYPFGFAIRRNTYSIIREILDNSGHQETLFPLLIPENEFMKEAEHIKGFENEVYWVTHGGKDPLDIPLALRPTSETAIYPMYKKWVRSHADFPLKLYQIVNTFRYETKHTRPLIRLREITSFKEAHTVHATWEDAEAQVKEAIGLYTEIYRRLAVPVLRSRRPDWDKFPGADYTDALDAVMPDGKTLQIGTVHHLGDNFAKTFDIKYEAPDGEQRYAHQTCYGISERSIAATISIHGDDKGLVLPPEIAPVQVVIIPIIFKKGAEEVFAACKDVQERLKKAGIRVEVDASDLRPGAKYYKWEMKGVPLRLEIGPRDLQNNVAVAVRRDTGEKDQITLLEIEAGVRLKFEAIQKSLYEKAGSELESRIFDCVDLDEVKEKIQEGVATIPWCGKRECGLAMEDHIGAGILGIPLTPRSKGKEKCPACGEETETRVYVARTY</sequence>
<comment type="function">
    <text evidence="1">Catalyzes the attachment of proline to tRNA(Pro) in a two-step reaction: proline is first activated by ATP to form Pro-AMP and then transferred to the acceptor end of tRNA(Pro).</text>
</comment>
<comment type="catalytic activity">
    <reaction evidence="1">
        <text>tRNA(Pro) + L-proline + ATP = L-prolyl-tRNA(Pro) + AMP + diphosphate</text>
        <dbReference type="Rhea" id="RHEA:14305"/>
        <dbReference type="Rhea" id="RHEA-COMP:9700"/>
        <dbReference type="Rhea" id="RHEA-COMP:9702"/>
        <dbReference type="ChEBI" id="CHEBI:30616"/>
        <dbReference type="ChEBI" id="CHEBI:33019"/>
        <dbReference type="ChEBI" id="CHEBI:60039"/>
        <dbReference type="ChEBI" id="CHEBI:78442"/>
        <dbReference type="ChEBI" id="CHEBI:78532"/>
        <dbReference type="ChEBI" id="CHEBI:456215"/>
        <dbReference type="EC" id="6.1.1.15"/>
    </reaction>
</comment>
<comment type="subunit">
    <text evidence="1">Homodimer.</text>
</comment>
<comment type="subcellular location">
    <subcellularLocation>
        <location evidence="1">Cytoplasm</location>
    </subcellularLocation>
</comment>
<comment type="domain">
    <text evidence="1">Consists of three domains: the N-terminal catalytic domain, the anticodon-binding domain and the C-terminal extension.</text>
</comment>
<comment type="similarity">
    <text evidence="1">Belongs to the class-II aminoacyl-tRNA synthetase family. ProS type 3 subfamily.</text>
</comment>
<gene>
    <name evidence="1" type="primary">proS</name>
    <name type="ordered locus">MM_0707</name>
</gene>
<feature type="chain" id="PRO_0000249162" description="Proline--tRNA ligase">
    <location>
        <begin position="1"/>
        <end position="480"/>
    </location>
</feature>
<reference key="1">
    <citation type="journal article" date="2002" name="J. Mol. Microbiol. Biotechnol.">
        <title>The genome of Methanosarcina mazei: evidence for lateral gene transfer between Bacteria and Archaea.</title>
        <authorList>
            <person name="Deppenmeier U."/>
            <person name="Johann A."/>
            <person name="Hartsch T."/>
            <person name="Merkl R."/>
            <person name="Schmitz R.A."/>
            <person name="Martinez-Arias R."/>
            <person name="Henne A."/>
            <person name="Wiezer A."/>
            <person name="Baeumer S."/>
            <person name="Jacobi C."/>
            <person name="Brueggemann H."/>
            <person name="Lienard T."/>
            <person name="Christmann A."/>
            <person name="Boemecke M."/>
            <person name="Steckel S."/>
            <person name="Bhattacharyya A."/>
            <person name="Lykidis A."/>
            <person name="Overbeek R."/>
            <person name="Klenk H.-P."/>
            <person name="Gunsalus R.P."/>
            <person name="Fritz H.-J."/>
            <person name="Gottschalk G."/>
        </authorList>
    </citation>
    <scope>NUCLEOTIDE SEQUENCE [LARGE SCALE GENOMIC DNA]</scope>
    <source>
        <strain>ATCC BAA-159 / DSM 3647 / Goe1 / Go1 / JCM 11833 / OCM 88</strain>
    </source>
</reference>
<name>SYP_METMA</name>
<evidence type="ECO:0000255" key="1">
    <source>
        <dbReference type="HAMAP-Rule" id="MF_01571"/>
    </source>
</evidence>
<dbReference type="EC" id="6.1.1.15" evidence="1"/>
<dbReference type="EMBL" id="AE008384">
    <property type="protein sequence ID" value="AAM30403.1"/>
    <property type="molecule type" value="Genomic_DNA"/>
</dbReference>
<dbReference type="RefSeq" id="WP_011032658.1">
    <property type="nucleotide sequence ID" value="NC_003901.1"/>
</dbReference>
<dbReference type="SMR" id="Q8PYZ1"/>
<dbReference type="GeneID" id="44086074"/>
<dbReference type="KEGG" id="mma:MM_0707"/>
<dbReference type="PATRIC" id="fig|192952.21.peg.843"/>
<dbReference type="eggNOG" id="arCOG00402">
    <property type="taxonomic scope" value="Archaea"/>
</dbReference>
<dbReference type="HOGENOM" id="CLU_001882_4_2_2"/>
<dbReference type="Proteomes" id="UP000000595">
    <property type="component" value="Chromosome"/>
</dbReference>
<dbReference type="GO" id="GO:0017101">
    <property type="term" value="C:aminoacyl-tRNA synthetase multienzyme complex"/>
    <property type="evidence" value="ECO:0007669"/>
    <property type="project" value="TreeGrafter"/>
</dbReference>
<dbReference type="GO" id="GO:0005737">
    <property type="term" value="C:cytoplasm"/>
    <property type="evidence" value="ECO:0007669"/>
    <property type="project" value="UniProtKB-SubCell"/>
</dbReference>
<dbReference type="GO" id="GO:0005524">
    <property type="term" value="F:ATP binding"/>
    <property type="evidence" value="ECO:0007669"/>
    <property type="project" value="UniProtKB-UniRule"/>
</dbReference>
<dbReference type="GO" id="GO:0004827">
    <property type="term" value="F:proline-tRNA ligase activity"/>
    <property type="evidence" value="ECO:0007669"/>
    <property type="project" value="UniProtKB-UniRule"/>
</dbReference>
<dbReference type="GO" id="GO:0006433">
    <property type="term" value="P:prolyl-tRNA aminoacylation"/>
    <property type="evidence" value="ECO:0007669"/>
    <property type="project" value="UniProtKB-UniRule"/>
</dbReference>
<dbReference type="CDD" id="cd00862">
    <property type="entry name" value="ProRS_anticodon_zinc"/>
    <property type="match status" value="1"/>
</dbReference>
<dbReference type="CDD" id="cd00778">
    <property type="entry name" value="ProRS_core_arch_euk"/>
    <property type="match status" value="1"/>
</dbReference>
<dbReference type="FunFam" id="3.40.50.800:FF:000005">
    <property type="entry name" value="bifunctional glutamate/proline--tRNA ligase"/>
    <property type="match status" value="1"/>
</dbReference>
<dbReference type="FunFam" id="3.30.930.10:FF:000037">
    <property type="entry name" value="Proline--tRNA ligase"/>
    <property type="match status" value="1"/>
</dbReference>
<dbReference type="Gene3D" id="3.40.50.800">
    <property type="entry name" value="Anticodon-binding domain"/>
    <property type="match status" value="1"/>
</dbReference>
<dbReference type="Gene3D" id="3.30.930.10">
    <property type="entry name" value="Bira Bifunctional Protein, Domain 2"/>
    <property type="match status" value="1"/>
</dbReference>
<dbReference type="Gene3D" id="3.30.110.30">
    <property type="entry name" value="C-terminal domain of ProRS"/>
    <property type="match status" value="1"/>
</dbReference>
<dbReference type="HAMAP" id="MF_01571">
    <property type="entry name" value="Pro_tRNA_synth_type3"/>
    <property type="match status" value="1"/>
</dbReference>
<dbReference type="InterPro" id="IPR002314">
    <property type="entry name" value="aa-tRNA-synt_IIb"/>
</dbReference>
<dbReference type="InterPro" id="IPR006195">
    <property type="entry name" value="aa-tRNA-synth_II"/>
</dbReference>
<dbReference type="InterPro" id="IPR045864">
    <property type="entry name" value="aa-tRNA-synth_II/BPL/LPL"/>
</dbReference>
<dbReference type="InterPro" id="IPR004154">
    <property type="entry name" value="Anticodon-bd"/>
</dbReference>
<dbReference type="InterPro" id="IPR036621">
    <property type="entry name" value="Anticodon-bd_dom_sf"/>
</dbReference>
<dbReference type="InterPro" id="IPR002316">
    <property type="entry name" value="Pro-tRNA-ligase_IIa"/>
</dbReference>
<dbReference type="InterPro" id="IPR004499">
    <property type="entry name" value="Pro-tRNA-ligase_IIa_arc-type"/>
</dbReference>
<dbReference type="InterPro" id="IPR016061">
    <property type="entry name" value="Pro-tRNA_ligase_II_C"/>
</dbReference>
<dbReference type="InterPro" id="IPR017449">
    <property type="entry name" value="Pro-tRNA_synth_II"/>
</dbReference>
<dbReference type="InterPro" id="IPR033721">
    <property type="entry name" value="ProRS_core_arch_euk"/>
</dbReference>
<dbReference type="NCBIfam" id="TIGR00408">
    <property type="entry name" value="proS_fam_I"/>
    <property type="match status" value="1"/>
</dbReference>
<dbReference type="PANTHER" id="PTHR43382:SF2">
    <property type="entry name" value="BIFUNCTIONAL GLUTAMATE_PROLINE--TRNA LIGASE"/>
    <property type="match status" value="1"/>
</dbReference>
<dbReference type="PANTHER" id="PTHR43382">
    <property type="entry name" value="PROLYL-TRNA SYNTHETASE"/>
    <property type="match status" value="1"/>
</dbReference>
<dbReference type="Pfam" id="PF03129">
    <property type="entry name" value="HGTP_anticodon"/>
    <property type="match status" value="1"/>
</dbReference>
<dbReference type="Pfam" id="PF09180">
    <property type="entry name" value="ProRS-C_1"/>
    <property type="match status" value="1"/>
</dbReference>
<dbReference type="Pfam" id="PF00587">
    <property type="entry name" value="tRNA-synt_2b"/>
    <property type="match status" value="1"/>
</dbReference>
<dbReference type="PRINTS" id="PR01046">
    <property type="entry name" value="TRNASYNTHPRO"/>
</dbReference>
<dbReference type="SMART" id="SM00946">
    <property type="entry name" value="ProRS-C_1"/>
    <property type="match status" value="1"/>
</dbReference>
<dbReference type="SUPFAM" id="SSF64586">
    <property type="entry name" value="C-terminal domain of ProRS"/>
    <property type="match status" value="1"/>
</dbReference>
<dbReference type="SUPFAM" id="SSF52954">
    <property type="entry name" value="Class II aaRS ABD-related"/>
    <property type="match status" value="1"/>
</dbReference>
<dbReference type="SUPFAM" id="SSF55681">
    <property type="entry name" value="Class II aaRS and biotin synthetases"/>
    <property type="match status" value="1"/>
</dbReference>
<dbReference type="PROSITE" id="PS50862">
    <property type="entry name" value="AA_TRNA_LIGASE_II"/>
    <property type="match status" value="1"/>
</dbReference>